<organism>
    <name type="scientific">Caenorhabditis elegans</name>
    <dbReference type="NCBI Taxonomy" id="6239"/>
    <lineage>
        <taxon>Eukaryota</taxon>
        <taxon>Metazoa</taxon>
        <taxon>Ecdysozoa</taxon>
        <taxon>Nematoda</taxon>
        <taxon>Chromadorea</taxon>
        <taxon>Rhabditida</taxon>
        <taxon>Rhabditina</taxon>
        <taxon>Rhabditomorpha</taxon>
        <taxon>Rhabditoidea</taxon>
        <taxon>Rhabditidae</taxon>
        <taxon>Peloderinae</taxon>
        <taxon>Caenorhabditis</taxon>
    </lineage>
</organism>
<reference key="1">
    <citation type="journal article" date="2004" name="Genes Dev.">
        <title>The AMP-activated protein kinase AAK-2 links energy levels and insulin-like signals to lifespan in C. elegans.</title>
        <authorList>
            <person name="Apfeld J."/>
            <person name="O'Connor G."/>
            <person name="McDonagh T."/>
            <person name="DiStefano P.S."/>
            <person name="Curtis R."/>
        </authorList>
    </citation>
    <scope>NUCLEOTIDE SEQUENCE [MRNA] (ISOFORM A)</scope>
    <scope>FUNCTION</scope>
</reference>
<reference key="2">
    <citation type="journal article" date="2005" name="Genes Dev.">
        <authorList>
            <person name="Apfeld J."/>
            <person name="O'Connor G."/>
            <person name="McDonagh T."/>
            <person name="DiStefano P.S."/>
            <person name="Curtis R."/>
        </authorList>
    </citation>
    <scope>ERRATUM OF PUBMED:15574588</scope>
</reference>
<reference key="3">
    <citation type="journal article" date="2005" name="Genes Dev.">
        <authorList>
            <person name="Apfeld J."/>
            <person name="O'Connor G."/>
            <person name="McDonagh T."/>
            <person name="DiStefano P.S."/>
            <person name="Curtis R."/>
        </authorList>
    </citation>
    <scope>ERRATUM OF PUBMED:15574588</scope>
</reference>
<reference key="4">
    <citation type="journal article" date="1994" name="Nature">
        <title>2.2 Mb of contiguous nucleotide sequence from chromosome III of C. elegans.</title>
        <authorList>
            <person name="Wilson R."/>
            <person name="Ainscough R."/>
            <person name="Anderson K."/>
            <person name="Baynes C."/>
            <person name="Berks M."/>
            <person name="Bonfield J."/>
            <person name="Burton J."/>
            <person name="Connell M."/>
            <person name="Copsey T."/>
            <person name="Cooper J."/>
            <person name="Coulson A."/>
            <person name="Craxton M."/>
            <person name="Dear S."/>
            <person name="Du Z."/>
            <person name="Durbin R."/>
            <person name="Favello A."/>
            <person name="Fraser A."/>
            <person name="Fulton L."/>
            <person name="Gardner A."/>
            <person name="Green P."/>
            <person name="Hawkins T."/>
            <person name="Hillier L."/>
            <person name="Jier M."/>
            <person name="Johnston L."/>
            <person name="Jones M."/>
            <person name="Kershaw J."/>
            <person name="Kirsten J."/>
            <person name="Laisster N."/>
            <person name="Latreille P."/>
            <person name="Lightning J."/>
            <person name="Lloyd C."/>
            <person name="Mortimore B."/>
            <person name="O'Callaghan M."/>
            <person name="Parsons J."/>
            <person name="Percy C."/>
            <person name="Rifken L."/>
            <person name="Roopra A."/>
            <person name="Saunders D."/>
            <person name="Shownkeen R."/>
            <person name="Sims M."/>
            <person name="Smaldon N."/>
            <person name="Smith A."/>
            <person name="Smith M."/>
            <person name="Sonnhammer E."/>
            <person name="Staden R."/>
            <person name="Sulston J."/>
            <person name="Thierry-Mieg J."/>
            <person name="Thomas K."/>
            <person name="Vaudin M."/>
            <person name="Vaughan K."/>
            <person name="Waterston R."/>
            <person name="Watson A."/>
            <person name="Weinstock L."/>
            <person name="Wilkinson-Sproat J."/>
            <person name="Wohldman P."/>
        </authorList>
    </citation>
    <scope>NUCLEOTIDE SEQUENCE [LARGE SCALE GENOMIC DNA]</scope>
    <source>
        <strain>Bristol N2</strain>
    </source>
</reference>
<reference key="5">
    <citation type="journal article" date="1998" name="Science">
        <title>Genome sequence of the nematode C. elegans: a platform for investigating biology.</title>
        <authorList>
            <consortium name="The C. elegans sequencing consortium"/>
        </authorList>
    </citation>
    <scope>NUCLEOTIDE SEQUENCE [LARGE SCALE GENOMIC DNA]</scope>
    <scope>ALTERNATIVE SPLICING</scope>
    <source>
        <strain>Bristol N2</strain>
    </source>
</reference>
<reference key="6">
    <citation type="journal article" date="2010" name="Development">
        <title>Differential requirements for STRAD in LKB1-dependent functions in C. elegans.</title>
        <authorList>
            <person name="Narbonne P."/>
            <person name="Hyenne V."/>
            <person name="Li S."/>
            <person name="Labbe J.C."/>
            <person name="Roy R."/>
        </authorList>
    </citation>
    <scope>FUNCTION</scope>
</reference>
<reference key="7">
    <citation type="journal article" date="2015" name="PLoS Genet.">
        <title>FLCN and AMPK Confer Resistance to Hyperosmotic Stress via Remodeling of Glycogen Stores.</title>
        <authorList>
            <person name="Possik E."/>
            <person name="Ajisebutu A."/>
            <person name="Manteghi S."/>
            <person name="Gingras M.C."/>
            <person name="Vijayaraghavan T."/>
            <person name="Flamand M."/>
            <person name="Coull B."/>
            <person name="Schmeisser K."/>
            <person name="Duchaine T."/>
            <person name="van Steensel M."/>
            <person name="Hall D.H."/>
            <person name="Pause A."/>
        </authorList>
    </citation>
    <scope>FUNCTION</scope>
    <scope>DISRUPTION PHENOTYPE</scope>
</reference>
<name>AAPK1_CAEEL</name>
<comment type="function">
    <text evidence="3 4 5">Probably does not act as a sensor that couples lifespan to information about energy levels and insulin-like signals (PubMed:15574588). Together with aak-2, involved in the establishment of germline stem cell (GSC) quiescence during dauer development (PubMed:20110331). Plays a role in the maintenance of glycogen stores which are necessary for resistance to hyperosmotic stress (PubMed:26439621).</text>
</comment>
<comment type="catalytic activity">
    <reaction>
        <text>L-seryl-[protein] + ATP = O-phospho-L-seryl-[protein] + ADP + H(+)</text>
        <dbReference type="Rhea" id="RHEA:17989"/>
        <dbReference type="Rhea" id="RHEA-COMP:9863"/>
        <dbReference type="Rhea" id="RHEA-COMP:11604"/>
        <dbReference type="ChEBI" id="CHEBI:15378"/>
        <dbReference type="ChEBI" id="CHEBI:29999"/>
        <dbReference type="ChEBI" id="CHEBI:30616"/>
        <dbReference type="ChEBI" id="CHEBI:83421"/>
        <dbReference type="ChEBI" id="CHEBI:456216"/>
        <dbReference type="EC" id="2.7.11.1"/>
    </reaction>
</comment>
<comment type="catalytic activity">
    <reaction>
        <text>L-threonyl-[protein] + ATP = O-phospho-L-threonyl-[protein] + ADP + H(+)</text>
        <dbReference type="Rhea" id="RHEA:46608"/>
        <dbReference type="Rhea" id="RHEA-COMP:11060"/>
        <dbReference type="Rhea" id="RHEA-COMP:11605"/>
        <dbReference type="ChEBI" id="CHEBI:15378"/>
        <dbReference type="ChEBI" id="CHEBI:30013"/>
        <dbReference type="ChEBI" id="CHEBI:30616"/>
        <dbReference type="ChEBI" id="CHEBI:61977"/>
        <dbReference type="ChEBI" id="CHEBI:456216"/>
        <dbReference type="EC" id="2.7.11.1"/>
    </reaction>
</comment>
<comment type="alternative products">
    <event type="alternative splicing"/>
    <isoform>
        <id>P45894-1</id>
        <name>a</name>
        <sequence type="displayed"/>
    </isoform>
    <isoform>
        <id>P45894-2</id>
        <name>b</name>
        <sequence type="described" ref="VSP_017190"/>
    </isoform>
</comment>
<comment type="disruption phenotype">
    <text evidence="5">Reduced survival as a result of hyperosmotic stress induced by NaCl. Double knockout with aak-2 results in reduced glycogen accumulation.</text>
</comment>
<comment type="similarity">
    <text evidence="6">Belongs to the protein kinase superfamily. CAMK Ser/Thr protein kinase family. SNF1 subfamily.</text>
</comment>
<feature type="chain" id="PRO_0000085598" description="5'-AMP-activated protein kinase catalytic subunit alpha-1">
    <location>
        <begin position="1"/>
        <end position="589"/>
    </location>
</feature>
<feature type="domain" description="Protein kinase" evidence="1">
    <location>
        <begin position="24"/>
        <end position="276"/>
    </location>
</feature>
<feature type="active site" description="Proton acceptor" evidence="1 2">
    <location>
        <position position="147"/>
    </location>
</feature>
<feature type="binding site" evidence="1">
    <location>
        <begin position="30"/>
        <end position="38"/>
    </location>
    <ligand>
        <name>ATP</name>
        <dbReference type="ChEBI" id="CHEBI:30616"/>
    </ligand>
</feature>
<feature type="binding site" evidence="1">
    <location>
        <position position="53"/>
    </location>
    <ligand>
        <name>ATP</name>
        <dbReference type="ChEBI" id="CHEBI:30616"/>
    </ligand>
</feature>
<feature type="splice variant" id="VSP_017190" description="In isoform b." evidence="6">
    <location>
        <begin position="1"/>
        <end position="171"/>
    </location>
</feature>
<feature type="sequence conflict" description="In Ref. 1; AAR06927." evidence="6" ref="1">
    <original>L</original>
    <variation>P</variation>
    <location>
        <position position="205"/>
    </location>
</feature>
<feature type="sequence conflict" description="In Ref. 1; AAR06927." evidence="6" ref="1">
    <original>R</original>
    <variation>H</variation>
    <location>
        <position position="277"/>
    </location>
</feature>
<evidence type="ECO:0000255" key="1">
    <source>
        <dbReference type="PROSITE-ProRule" id="PRU00159"/>
    </source>
</evidence>
<evidence type="ECO:0000255" key="2">
    <source>
        <dbReference type="PROSITE-ProRule" id="PRU10027"/>
    </source>
</evidence>
<evidence type="ECO:0000269" key="3">
    <source>
    </source>
</evidence>
<evidence type="ECO:0000269" key="4">
    <source>
    </source>
</evidence>
<evidence type="ECO:0000269" key="5">
    <source>
    </source>
</evidence>
<evidence type="ECO:0000305" key="6"/>
<dbReference type="EC" id="2.7.11.1"/>
<dbReference type="EMBL" id="AY347272">
    <property type="protein sequence ID" value="AAR06927.1"/>
    <property type="molecule type" value="mRNA"/>
</dbReference>
<dbReference type="EMBL" id="FO081577">
    <property type="protein sequence ID" value="CCD72533.1"/>
    <property type="molecule type" value="Genomic_DNA"/>
</dbReference>
<dbReference type="EMBL" id="FO081577">
    <property type="protein sequence ID" value="CCD72534.1"/>
    <property type="molecule type" value="Genomic_DNA"/>
</dbReference>
<dbReference type="PIR" id="S44859">
    <property type="entry name" value="S44859"/>
</dbReference>
<dbReference type="RefSeq" id="NP_001380007.1">
    <molecule id="P45894-2"/>
    <property type="nucleotide sequence ID" value="NM_001392162.1"/>
</dbReference>
<dbReference type="RefSeq" id="NP_741254.3">
    <molecule id="P45894-1"/>
    <property type="nucleotide sequence ID" value="NM_171216.6"/>
</dbReference>
<dbReference type="RefSeq" id="NP_741255.3">
    <property type="nucleotide sequence ID" value="NM_171217.4"/>
</dbReference>
<dbReference type="SMR" id="P45894"/>
<dbReference type="BioGRID" id="41433">
    <property type="interactions" value="1"/>
</dbReference>
<dbReference type="FunCoup" id="P45894">
    <property type="interactions" value="309"/>
</dbReference>
<dbReference type="STRING" id="6239.PAR2.3a.2"/>
<dbReference type="PaxDb" id="6239-PAR2.3a"/>
<dbReference type="PeptideAtlas" id="P45894"/>
<dbReference type="EnsemblMetazoa" id="PAR2.3a.1">
    <molecule id="P45894-1"/>
    <property type="protein sequence ID" value="PAR2.3a.1"/>
    <property type="gene ID" value="WBGene00019801"/>
</dbReference>
<dbReference type="EnsemblMetazoa" id="PAR2.3b.1">
    <molecule id="P45894-2"/>
    <property type="protein sequence ID" value="PAR2.3b.1"/>
    <property type="gene ID" value="WBGene00019801"/>
</dbReference>
<dbReference type="GeneID" id="176230"/>
<dbReference type="KEGG" id="cel:CELE_PAR2.3"/>
<dbReference type="UCSC" id="PAR2.3b.1">
    <molecule id="P45894-1"/>
    <property type="organism name" value="c. elegans"/>
</dbReference>
<dbReference type="AGR" id="WB:WBGene00019801"/>
<dbReference type="CTD" id="176230"/>
<dbReference type="WormBase" id="PAR2.3a">
    <molecule id="P45894-1"/>
    <property type="protein sequence ID" value="CE39167"/>
    <property type="gene ID" value="WBGene00019801"/>
    <property type="gene designation" value="aak-1"/>
</dbReference>
<dbReference type="WormBase" id="PAR2.3b">
    <molecule id="P45894-2"/>
    <property type="protein sequence ID" value="CE39168"/>
    <property type="gene ID" value="WBGene00019801"/>
    <property type="gene designation" value="aak-1"/>
</dbReference>
<dbReference type="eggNOG" id="KOG0583">
    <property type="taxonomic scope" value="Eukaryota"/>
</dbReference>
<dbReference type="HOGENOM" id="CLU_000288_59_3_1"/>
<dbReference type="InParanoid" id="P45894"/>
<dbReference type="OMA" id="FPECENE"/>
<dbReference type="OrthoDB" id="193931at2759"/>
<dbReference type="PhylomeDB" id="P45894"/>
<dbReference type="Reactome" id="R-CEL-1632852">
    <property type="pathway name" value="Macroautophagy"/>
</dbReference>
<dbReference type="Reactome" id="R-CEL-380972">
    <property type="pathway name" value="Energy dependent regulation of mTOR by LKB1-AMPK"/>
</dbReference>
<dbReference type="Reactome" id="R-CEL-5628897">
    <property type="pathway name" value="TP53 Regulates Metabolic Genes"/>
</dbReference>
<dbReference type="PRO" id="PR:P45894"/>
<dbReference type="Proteomes" id="UP000001940">
    <property type="component" value="Chromosome III"/>
</dbReference>
<dbReference type="Bgee" id="WBGene00019801">
    <property type="expression patterns" value="Expressed in germ line (C elegans) and 4 other cell types or tissues"/>
</dbReference>
<dbReference type="GO" id="GO:0005737">
    <property type="term" value="C:cytoplasm"/>
    <property type="evidence" value="ECO:0000318"/>
    <property type="project" value="GO_Central"/>
</dbReference>
<dbReference type="GO" id="GO:0031588">
    <property type="term" value="C:nucleotide-activated protein kinase complex"/>
    <property type="evidence" value="ECO:0000318"/>
    <property type="project" value="GO_Central"/>
</dbReference>
<dbReference type="GO" id="GO:0005634">
    <property type="term" value="C:nucleus"/>
    <property type="evidence" value="ECO:0000318"/>
    <property type="project" value="GO_Central"/>
</dbReference>
<dbReference type="GO" id="GO:0005524">
    <property type="term" value="F:ATP binding"/>
    <property type="evidence" value="ECO:0007669"/>
    <property type="project" value="UniProtKB-KW"/>
</dbReference>
<dbReference type="GO" id="GO:0106310">
    <property type="term" value="F:protein serine kinase activity"/>
    <property type="evidence" value="ECO:0007669"/>
    <property type="project" value="RHEA"/>
</dbReference>
<dbReference type="GO" id="GO:0004674">
    <property type="term" value="F:protein serine/threonine kinase activity"/>
    <property type="evidence" value="ECO:0000318"/>
    <property type="project" value="GO_Central"/>
</dbReference>
<dbReference type="GO" id="GO:0042149">
    <property type="term" value="P:cellular response to glucose starvation"/>
    <property type="evidence" value="ECO:0000318"/>
    <property type="project" value="GO_Central"/>
</dbReference>
<dbReference type="GO" id="GO:0008285">
    <property type="term" value="P:negative regulation of cell population proliferation"/>
    <property type="evidence" value="ECO:0000316"/>
    <property type="project" value="WormBase"/>
</dbReference>
<dbReference type="GO" id="GO:1904262">
    <property type="term" value="P:negative regulation of TORC1 signaling"/>
    <property type="evidence" value="ECO:0000318"/>
    <property type="project" value="GO_Central"/>
</dbReference>
<dbReference type="GO" id="GO:0043050">
    <property type="term" value="P:nematode pharyngeal pumping"/>
    <property type="evidence" value="ECO:0000315"/>
    <property type="project" value="UniProtKB"/>
</dbReference>
<dbReference type="GO" id="GO:0010508">
    <property type="term" value="P:positive regulation of autophagy"/>
    <property type="evidence" value="ECO:0000318"/>
    <property type="project" value="GO_Central"/>
</dbReference>
<dbReference type="GO" id="GO:1990044">
    <property type="term" value="P:protein localization to lipid droplet"/>
    <property type="evidence" value="ECO:0000318"/>
    <property type="project" value="GO_Central"/>
</dbReference>
<dbReference type="CDD" id="cd12122">
    <property type="entry name" value="AMPKA_C"/>
    <property type="match status" value="1"/>
</dbReference>
<dbReference type="CDD" id="cd14336">
    <property type="entry name" value="UBA_AID_AMPKalpha"/>
    <property type="match status" value="1"/>
</dbReference>
<dbReference type="FunFam" id="3.30.200.20:FF:000042">
    <property type="entry name" value="Aurora kinase A"/>
    <property type="match status" value="1"/>
</dbReference>
<dbReference type="FunFam" id="1.10.510.10:FF:000407">
    <property type="entry name" value="Non-specific serine/threonine protein kinase"/>
    <property type="match status" value="1"/>
</dbReference>
<dbReference type="FunFam" id="1.10.8.10:FF:000055">
    <property type="entry name" value="Non-specific serine/threonine protein kinase"/>
    <property type="match status" value="1"/>
</dbReference>
<dbReference type="Gene3D" id="1.10.8.10">
    <property type="entry name" value="DNA helicase RuvA subunit, C-terminal domain"/>
    <property type="match status" value="1"/>
</dbReference>
<dbReference type="Gene3D" id="3.30.310.80">
    <property type="entry name" value="Kinase associated domain 1, KA1"/>
    <property type="match status" value="1"/>
</dbReference>
<dbReference type="Gene3D" id="3.30.200.20">
    <property type="entry name" value="Phosphorylase Kinase, domain 1"/>
    <property type="match status" value="1"/>
</dbReference>
<dbReference type="Gene3D" id="1.10.510.10">
    <property type="entry name" value="Transferase(Phosphotransferase) domain 1"/>
    <property type="match status" value="1"/>
</dbReference>
<dbReference type="InterPro" id="IPR028375">
    <property type="entry name" value="KA1/Ssp2_C"/>
</dbReference>
<dbReference type="InterPro" id="IPR011009">
    <property type="entry name" value="Kinase-like_dom_sf"/>
</dbReference>
<dbReference type="InterPro" id="IPR049020">
    <property type="entry name" value="PRKAA1/2_AID"/>
</dbReference>
<dbReference type="InterPro" id="IPR000719">
    <property type="entry name" value="Prot_kinase_dom"/>
</dbReference>
<dbReference type="InterPro" id="IPR017441">
    <property type="entry name" value="Protein_kinase_ATP_BS"/>
</dbReference>
<dbReference type="InterPro" id="IPR008271">
    <property type="entry name" value="Ser/Thr_kinase_AS"/>
</dbReference>
<dbReference type="PANTHER" id="PTHR24346">
    <property type="entry name" value="MAP/MICROTUBULE AFFINITY-REGULATING KINASE"/>
    <property type="match status" value="1"/>
</dbReference>
<dbReference type="PANTHER" id="PTHR24346:SF110">
    <property type="entry name" value="NON-SPECIFIC SERINE_THREONINE PROTEIN KINASE"/>
    <property type="match status" value="1"/>
</dbReference>
<dbReference type="Pfam" id="PF21147">
    <property type="entry name" value="AMPK_alpha_AID"/>
    <property type="match status" value="1"/>
</dbReference>
<dbReference type="Pfam" id="PF00069">
    <property type="entry name" value="Pkinase"/>
    <property type="match status" value="1"/>
</dbReference>
<dbReference type="SMART" id="SM00220">
    <property type="entry name" value="S_TKc"/>
    <property type="match status" value="1"/>
</dbReference>
<dbReference type="SUPFAM" id="SSF103243">
    <property type="entry name" value="KA1-like"/>
    <property type="match status" value="1"/>
</dbReference>
<dbReference type="SUPFAM" id="SSF56112">
    <property type="entry name" value="Protein kinase-like (PK-like)"/>
    <property type="match status" value="1"/>
</dbReference>
<dbReference type="PROSITE" id="PS00107">
    <property type="entry name" value="PROTEIN_KINASE_ATP"/>
    <property type="match status" value="1"/>
</dbReference>
<dbReference type="PROSITE" id="PS50011">
    <property type="entry name" value="PROTEIN_KINASE_DOM"/>
    <property type="match status" value="1"/>
</dbReference>
<dbReference type="PROSITE" id="PS00108">
    <property type="entry name" value="PROTEIN_KINASE_ST"/>
    <property type="match status" value="1"/>
</dbReference>
<gene>
    <name type="primary">aak-1</name>
    <name type="ORF">PAR2.3</name>
</gene>
<accession>P45894</accession>
<accession>Q3HKC8</accession>
<accession>Q3HKC9</accession>
<accession>Q5VKL2</accession>
<protein>
    <recommendedName>
        <fullName>5'-AMP-activated protein kinase catalytic subunit alpha-1</fullName>
        <shortName>AMPK subunit alpha-1</shortName>
        <ecNumber>2.7.11.1</ecNumber>
    </recommendedName>
</protein>
<sequence>MPPSGRFDRTIALAGTGHLKIGNFVIKETIGKGAFGAVKRGTHIQTGYDVAIKILNRGRMKGLGTVNKTRNEIDNLQKLTHPHITRLFRVISTPSDIFLVMELVSGGELFSYITRKGALPIRESRRYFQQIISGVSYCHNHMIVHRDLKPENLLLDANKNIKIADFGLSNYMTDGDLLSTACGSPNYAAPELISNKLYVGPEVDLWSCGVILYAMLCGTLPFDDQNVPTLFAKIKSGRYTVPYSMEKQAADLISTMLQVDPVKRADVKRIVNHSWFRIDLPYYLFPECENESSIVDIDVVQSVAEKFDVKEEDVTGALLAEDHHHFLCIAYRLEVNHKRNADESSQKAMEDFWEIGKTMKMGSTSLPVGATTKTNVGRKILEGLKKEQKKLTWNLGIRACLDPVETMKHVFLSLKSVDMEWKVLSMYHIIVRSKPTPINPDPVKVSLQLFALDKKENNKGYLLDFKGLTEDEEAVPPSRCRSRAASVSVTLAKSKSDLNGNSSKVPMSPLSPMSPISPSVNIPKVRVDDADASLKSSLNSSIYMADIENSMESLDEVSTQSSEPEAPIRSQTMEFFATCHIIMQALLAE</sequence>
<keyword id="KW-0025">Alternative splicing</keyword>
<keyword id="KW-0067">ATP-binding</keyword>
<keyword id="KW-0418">Kinase</keyword>
<keyword id="KW-0547">Nucleotide-binding</keyword>
<keyword id="KW-1185">Reference proteome</keyword>
<keyword id="KW-0723">Serine/threonine-protein kinase</keyword>
<keyword id="KW-0808">Transferase</keyword>
<proteinExistence type="evidence at transcript level"/>